<feature type="signal peptide">
    <location>
        <begin position="1"/>
        <end position="27"/>
    </location>
</feature>
<feature type="chain" id="PRO_0000014629" description="T-cell surface glycoprotein CD4">
    <location>
        <begin position="28"/>
        <end position="457"/>
    </location>
</feature>
<feature type="topological domain" description="Extracellular" evidence="3">
    <location>
        <begin position="28"/>
        <end position="394"/>
    </location>
</feature>
<feature type="transmembrane region" description="Helical" evidence="3">
    <location>
        <begin position="395"/>
        <end position="417"/>
    </location>
</feature>
<feature type="topological domain" description="Cytoplasmic" evidence="3">
    <location>
        <begin position="418"/>
        <end position="457"/>
    </location>
</feature>
<feature type="domain" description="Ig-like V-type">
    <location>
        <begin position="28"/>
        <end position="127"/>
    </location>
</feature>
<feature type="domain" description="Ig-like C2-type 1">
    <location>
        <begin position="128"/>
        <end position="206"/>
    </location>
</feature>
<feature type="domain" description="Ig-like C2-type 2">
    <location>
        <begin position="207"/>
        <end position="316"/>
    </location>
</feature>
<feature type="domain" description="Ig-like C2-type 3">
    <location>
        <begin position="317"/>
        <end position="374"/>
    </location>
</feature>
<feature type="modified residue" description="Phosphoserine" evidence="2">
    <location>
        <position position="432"/>
    </location>
</feature>
<feature type="modified residue" description="Phosphoserine" evidence="2">
    <location>
        <position position="439"/>
    </location>
</feature>
<feature type="lipid moiety-binding region" description="S-palmitoyl cysteine" evidence="1">
    <location>
        <position position="418"/>
    </location>
</feature>
<feature type="lipid moiety-binding region" description="S-palmitoyl cysteine" evidence="1">
    <location>
        <position position="421"/>
    </location>
</feature>
<feature type="glycosylation site" description="N-linked (GlcNAc...) asparagine" evidence="5">
    <location>
        <position position="186"/>
    </location>
</feature>
<feature type="glycosylation site" description="N-linked (GlcNAc...) asparagine" evidence="5">
    <location>
        <position position="297"/>
    </location>
</feature>
<feature type="glycosylation site" description="N-linked (GlcNAc...) asparagine" evidence="3">
    <location>
        <position position="392"/>
    </location>
</feature>
<feature type="disulfide bond" evidence="4 5">
    <location>
        <begin position="43"/>
        <end position="111"/>
    </location>
</feature>
<feature type="disulfide bond" evidence="4 5">
    <location>
        <begin position="158"/>
        <end position="187"/>
    </location>
</feature>
<feature type="disulfide bond" evidence="4 5">
    <location>
        <begin position="328"/>
        <end position="370"/>
    </location>
</feature>
<feature type="mutagenesis site" description="No change in secretion; when associated with S-297." evidence="5">
    <original>N</original>
    <variation>T</variation>
    <location>
        <position position="186"/>
    </location>
</feature>
<feature type="mutagenesis site" description="No change in secretion; when associated with T-186." evidence="5">
    <original>N</original>
    <variation>S</variation>
    <location>
        <position position="297"/>
    </location>
</feature>
<feature type="strand" evidence="6">
    <location>
        <begin position="213"/>
        <end position="217"/>
    </location>
</feature>
<feature type="strand" evidence="6">
    <location>
        <begin position="222"/>
        <end position="225"/>
    </location>
</feature>
<feature type="strand" evidence="6">
    <location>
        <begin position="235"/>
        <end position="245"/>
    </location>
</feature>
<feature type="strand" evidence="6">
    <location>
        <begin position="252"/>
        <end position="258"/>
    </location>
</feature>
<feature type="strand" evidence="6">
    <location>
        <begin position="261"/>
        <end position="266"/>
    </location>
</feature>
<feature type="strand" evidence="6">
    <location>
        <begin position="282"/>
        <end position="285"/>
    </location>
</feature>
<feature type="helix" evidence="6">
    <location>
        <begin position="290"/>
        <end position="292"/>
    </location>
</feature>
<feature type="strand" evidence="6">
    <location>
        <begin position="294"/>
        <end position="301"/>
    </location>
</feature>
<feature type="strand" evidence="6">
    <location>
        <begin position="303"/>
        <end position="319"/>
    </location>
</feature>
<feature type="strand" evidence="6">
    <location>
        <begin position="321"/>
        <end position="332"/>
    </location>
</feature>
<feature type="strand" evidence="6">
    <location>
        <begin position="336"/>
        <end position="344"/>
    </location>
</feature>
<feature type="strand" evidence="6">
    <location>
        <begin position="349"/>
        <end position="362"/>
    </location>
</feature>
<feature type="strand" evidence="6">
    <location>
        <begin position="365"/>
        <end position="374"/>
    </location>
</feature>
<feature type="strand" evidence="6">
    <location>
        <begin position="377"/>
        <end position="385"/>
    </location>
</feature>
<name>CD4_RAT</name>
<sequence length="457" mass="51438">MCRGFSFRHLLPLLLLQLSKLLVVTQGKTVVLGKEGGSAELPCESTSRRSASFAWKSSDQKTILGYKNKLLIKGSLELYSRFDSRKNAWERGSFPLIINKLRMEDSQTYVCELENKKEEVELWVFRVTFNPGTRLLQGQSLTLILDSNPKVSDPPIECKHKSSNIVKDSKAFSTHSLRIQDSGIWNCTVTLNQKKHSFDMKLSVLGFASTSITAYKSEGESAEFSFPLNLGEESLQGELRWKAEKAPSSQSWITFSLKNQKVSVQKSTSNPKFQLSETLPLTLQIPQVSLQFAGSGNLTLTLDRGILYQEVNLVVMKVTQPDSNTLTCEVMGPTSPKMRLILKQENQEARVSRQEKVIQVQAPEAGVWQCLLSEGEEVKMDSKIQVLSKGLNQTMFLAVVLGSAFSFLVFTGLCILFCVRCRHQQRQAARMSQIKRLLSEKKTCQCSHRMQKSHNLI</sequence>
<organism>
    <name type="scientific">Rattus norvegicus</name>
    <name type="common">Rat</name>
    <dbReference type="NCBI Taxonomy" id="10116"/>
    <lineage>
        <taxon>Eukaryota</taxon>
        <taxon>Metazoa</taxon>
        <taxon>Chordata</taxon>
        <taxon>Craniata</taxon>
        <taxon>Vertebrata</taxon>
        <taxon>Euteleostomi</taxon>
        <taxon>Mammalia</taxon>
        <taxon>Eutheria</taxon>
        <taxon>Euarchontoglires</taxon>
        <taxon>Glires</taxon>
        <taxon>Rodentia</taxon>
        <taxon>Myomorpha</taxon>
        <taxon>Muroidea</taxon>
        <taxon>Muridae</taxon>
        <taxon>Murinae</taxon>
        <taxon>Rattus</taxon>
    </lineage>
</organism>
<keyword id="KW-0002">3D-structure</keyword>
<keyword id="KW-1064">Adaptive immunity</keyword>
<keyword id="KW-1003">Cell membrane</keyword>
<keyword id="KW-0903">Direct protein sequencing</keyword>
<keyword id="KW-1015">Disulfide bond</keyword>
<keyword id="KW-0325">Glycoprotein</keyword>
<keyword id="KW-0391">Immunity</keyword>
<keyword id="KW-0393">Immunoglobulin domain</keyword>
<keyword id="KW-0449">Lipoprotein</keyword>
<keyword id="KW-0472">Membrane</keyword>
<keyword id="KW-0564">Palmitate</keyword>
<keyword id="KW-0597">Phosphoprotein</keyword>
<keyword id="KW-1185">Reference proteome</keyword>
<keyword id="KW-0677">Repeat</keyword>
<keyword id="KW-0732">Signal</keyword>
<keyword id="KW-0812">Transmembrane</keyword>
<keyword id="KW-1133">Transmembrane helix</keyword>
<accession>P05540</accession>
<reference key="1">
    <citation type="journal article" date="1987" name="Proc. Natl. Acad. Sci. U.S.A.">
        <title>Peptide and nucleotide sequences of rat CD4 (W3/25) antigen: evidence for derivation from a structure with four immunoglobulin-related domains.</title>
        <authorList>
            <person name="Clark S.J."/>
            <person name="Jefferies W.A."/>
            <person name="Barclay A.N."/>
            <person name="Gagnon J."/>
            <person name="Williams A.F."/>
        </authorList>
    </citation>
    <scope>NUCLEOTIDE SEQUENCE [MRNA]</scope>
    <scope>PARTIAL PROTEIN SEQUENCE</scope>
</reference>
<reference key="2">
    <citation type="journal article" date="1990" name="J. Biol. Chem.">
        <title>High level expression in Chinese hamster ovary cells of soluble forms of CD4 T lymphocyte glycoprotein including glycosylation variants.</title>
        <authorList>
            <person name="Davis S.J."/>
            <person name="Ward H.A."/>
            <person name="Puklavec M.J."/>
            <person name="Willis A.C."/>
            <person name="Williams A.F."/>
            <person name="Barclay A.N."/>
        </authorList>
    </citation>
    <scope>PROTEIN SEQUENCE OF 42-51; 83-88; 95-101; 109-112; 146-164; 178-192; 256-273; 292-300; 327-329 AND 368-371</scope>
    <scope>DISULFIDE BONDS</scope>
    <scope>GLYCOSYLATION AT ASN-186 AND ASN-297</scope>
    <scope>MUTAGENESIS OF ASN-186 AND ASN-297</scope>
</reference>
<reference key="3">
    <citation type="journal article" date="1993" name="Science">
        <title>Crystal structure of domains 3 and 4 of rat CD4: relation to the NH2-terminal domains.</title>
        <authorList>
            <person name="Brady R.L."/>
            <person name="Dodson E.J."/>
            <person name="Dodson G.G."/>
            <person name="Lange G."/>
            <person name="Davis S.J."/>
            <person name="Williams A.F."/>
            <person name="Barclay A.N."/>
        </authorList>
    </citation>
    <scope>X-RAY CRYSTALLOGRAPHY (2.8 ANGSTROMS) OF 210-393</scope>
</reference>
<evidence type="ECO:0000250" key="1"/>
<evidence type="ECO:0000250" key="2">
    <source>
        <dbReference type="UniProtKB" id="P01730"/>
    </source>
</evidence>
<evidence type="ECO:0000255" key="3"/>
<evidence type="ECO:0000255" key="4">
    <source>
        <dbReference type="PROSITE-ProRule" id="PRU00114"/>
    </source>
</evidence>
<evidence type="ECO:0000269" key="5">
    <source>
    </source>
</evidence>
<evidence type="ECO:0007829" key="6">
    <source>
        <dbReference type="PDB" id="1CID"/>
    </source>
</evidence>
<gene>
    <name type="primary">Cd4</name>
</gene>
<protein>
    <recommendedName>
        <fullName>T-cell surface glycoprotein CD4</fullName>
    </recommendedName>
    <alternativeName>
        <fullName>T-cell surface antigen T4/Leu-3</fullName>
    </alternativeName>
    <alternativeName>
        <fullName>W3/25 antigen</fullName>
    </alternativeName>
    <cdAntigenName>CD4</cdAntigenName>
</protein>
<proteinExistence type="evidence at protein level"/>
<comment type="function">
    <text evidence="2">Integral membrane glycoprotein that plays an essential role in the immune response and serves multiple functions in responses against both external and internal offenses. In T-cells, functions primarily as a coreceptor for MHC class II molecule:peptide complex. The antigens presented by class II peptides are derived from extracellular proteins while class I peptides are derived from cytosolic proteins. Interacts simultaneously with the T-cell receptor (TCR) and the MHC class II presented by antigen presenting cells (APCs). In turn, recruits the Src kinase LCK to the vicinity of the TCR-CD3 complex. LCK then initiates different intracellular signaling pathways by phosphorylating various substrates ultimately leading to lymphokine production, motility, adhesion and activation of T-helper cells. In other cells such as macrophages or NK cells, plays a role in differentiation/activation, cytokine expression and cell migration in a TCR/LCK-independent pathway. Participates in the development of T-helper cells in the thymus and triggers the differentiation of monocytes into functional mature macrophages.</text>
</comment>
<comment type="subunit">
    <text evidence="2">Forms disulfide-linked homodimers at the cell surface. Interacts with LCK. Interacts with PTK2/FAK1. Binds to P4HB/PDI. Interacts with IL16; this interaction induces a CD4-dependent signaling in lymphocytes. Interacts (via Ig-like V-type domain) with MHCII alpha chain (via alpha-2 domain) and beta chain (via beta-2 domain); this interaction increases the affinity of TCR for peptide-MHCII. CD4 oligomerization via Ig-like C2-type 2 and 3 domains appears to be required for stable binding to MHCII and adhesion between T cells and APCs.</text>
</comment>
<comment type="subcellular location">
    <subcellularLocation>
        <location evidence="2">Cell membrane</location>
        <topology evidence="2">Single-pass type I membrane protein</topology>
    </subcellularLocation>
    <text evidence="2">Localizes to lipid rafts.</text>
</comment>
<comment type="domain">
    <text evidence="2">The Ig-like V-type domain mediates the interaction with MHCII.</text>
</comment>
<comment type="PTM">
    <text evidence="2">Palmitoylation and association with LCK contribute to the enrichment of CD4 in lipid rafts.</text>
</comment>
<comment type="PTM">
    <text evidence="2">Phosphorylated by PKC; phosphorylation plays an important role for CD4 internalization.</text>
</comment>
<dbReference type="EMBL" id="M15768">
    <property type="protein sequence ID" value="AAA40901.1"/>
    <property type="molecule type" value="mRNA"/>
</dbReference>
<dbReference type="PIR" id="A27449">
    <property type="entry name" value="A27449"/>
</dbReference>
<dbReference type="RefSeq" id="NP_036837.1">
    <property type="nucleotide sequence ID" value="NM_012705.1"/>
</dbReference>
<dbReference type="RefSeq" id="XP_006237393.1">
    <property type="nucleotide sequence ID" value="XM_006237331.5"/>
</dbReference>
<dbReference type="RefSeq" id="XP_008761502.1">
    <property type="nucleotide sequence ID" value="XM_008763280.2"/>
</dbReference>
<dbReference type="PDB" id="1CID">
    <property type="method" value="X-ray"/>
    <property type="resolution" value="2.80 A"/>
    <property type="chains" value="A=210-386"/>
</dbReference>
<dbReference type="PDBsum" id="1CID"/>
<dbReference type="SMR" id="P05540"/>
<dbReference type="FunCoup" id="P05540">
    <property type="interactions" value="319"/>
</dbReference>
<dbReference type="STRING" id="10116.ENSRNOP00000021915"/>
<dbReference type="GlyConnect" id="588">
    <property type="glycosylation" value="10 N-Linked glycans"/>
</dbReference>
<dbReference type="GlyCosmos" id="P05540">
    <property type="glycosylation" value="3 sites, 19 glycans"/>
</dbReference>
<dbReference type="GlyGen" id="P05540">
    <property type="glycosylation" value="6 sites, 19 N-linked glycans (1 site)"/>
</dbReference>
<dbReference type="iPTMnet" id="P05540"/>
<dbReference type="PhosphoSitePlus" id="P05540"/>
<dbReference type="PaxDb" id="10116-ENSRNOP00000021915"/>
<dbReference type="GeneID" id="24932"/>
<dbReference type="KEGG" id="rno:24932"/>
<dbReference type="UCSC" id="RGD:2306">
    <property type="organism name" value="rat"/>
</dbReference>
<dbReference type="AGR" id="RGD:2306"/>
<dbReference type="CTD" id="920"/>
<dbReference type="RGD" id="2306">
    <property type="gene designation" value="Cd4"/>
</dbReference>
<dbReference type="eggNOG" id="ENOG502S0W5">
    <property type="taxonomic scope" value="Eukaryota"/>
</dbReference>
<dbReference type="HOGENOM" id="CLU_047414_0_0_1"/>
<dbReference type="InParanoid" id="P05540"/>
<dbReference type="OrthoDB" id="8657369at2759"/>
<dbReference type="PhylomeDB" id="P05540"/>
<dbReference type="TreeFam" id="TF335974"/>
<dbReference type="Reactome" id="R-RNO-1462054">
    <property type="pathway name" value="Alpha-defensins"/>
</dbReference>
<dbReference type="Reactome" id="R-RNO-202424">
    <property type="pathway name" value="Downstream TCR signaling"/>
</dbReference>
<dbReference type="Reactome" id="R-RNO-202427">
    <property type="pathway name" value="Phosphorylation of CD3 and TCR zeta chains"/>
</dbReference>
<dbReference type="Reactome" id="R-RNO-202430">
    <property type="pathway name" value="Translocation of ZAP-70 to Immunological synapse"/>
</dbReference>
<dbReference type="Reactome" id="R-RNO-202433">
    <property type="pathway name" value="Generation of second messenger molecules"/>
</dbReference>
<dbReference type="Reactome" id="R-RNO-389948">
    <property type="pathway name" value="Co-inhibition by PD-1"/>
</dbReference>
<dbReference type="Reactome" id="R-RNO-449836">
    <property type="pathway name" value="Other interleukin signaling"/>
</dbReference>
<dbReference type="Reactome" id="R-RNO-8856825">
    <property type="pathway name" value="Cargo recognition for clathrin-mediated endocytosis"/>
</dbReference>
<dbReference type="Reactome" id="R-RNO-8856828">
    <property type="pathway name" value="Clathrin-mediated endocytosis"/>
</dbReference>
<dbReference type="EvolutionaryTrace" id="P05540"/>
<dbReference type="PRO" id="PR:P05540"/>
<dbReference type="Proteomes" id="UP000002494">
    <property type="component" value="Chromosome 4"/>
</dbReference>
<dbReference type="Bgee" id="ENSRNOG00000016294">
    <property type="expression patterns" value="Expressed in thymus and 18 other cell types or tissues"/>
</dbReference>
<dbReference type="GO" id="GO:0009986">
    <property type="term" value="C:cell surface"/>
    <property type="evidence" value="ECO:0000314"/>
    <property type="project" value="RGD"/>
</dbReference>
<dbReference type="GO" id="GO:0005788">
    <property type="term" value="C:endoplasmic reticulum lumen"/>
    <property type="evidence" value="ECO:0000266"/>
    <property type="project" value="RGD"/>
</dbReference>
<dbReference type="GO" id="GO:0005789">
    <property type="term" value="C:endoplasmic reticulum membrane"/>
    <property type="evidence" value="ECO:0000266"/>
    <property type="project" value="RGD"/>
</dbReference>
<dbReference type="GO" id="GO:0009897">
    <property type="term" value="C:external side of plasma membrane"/>
    <property type="evidence" value="ECO:0000314"/>
    <property type="project" value="RGD"/>
</dbReference>
<dbReference type="GO" id="GO:0045121">
    <property type="term" value="C:membrane raft"/>
    <property type="evidence" value="ECO:0000266"/>
    <property type="project" value="RGD"/>
</dbReference>
<dbReference type="GO" id="GO:0005886">
    <property type="term" value="C:plasma membrane"/>
    <property type="evidence" value="ECO:0000266"/>
    <property type="project" value="RGD"/>
</dbReference>
<dbReference type="GO" id="GO:0015026">
    <property type="term" value="F:coreceptor activity"/>
    <property type="evidence" value="ECO:0007669"/>
    <property type="project" value="InterPro"/>
</dbReference>
<dbReference type="GO" id="GO:0019899">
    <property type="term" value="F:enzyme binding"/>
    <property type="evidence" value="ECO:0000266"/>
    <property type="project" value="RGD"/>
</dbReference>
<dbReference type="GO" id="GO:0042802">
    <property type="term" value="F:identical protein binding"/>
    <property type="evidence" value="ECO:0000266"/>
    <property type="project" value="RGD"/>
</dbReference>
<dbReference type="GO" id="GO:0019865">
    <property type="term" value="F:immunoglobulin binding"/>
    <property type="evidence" value="ECO:0000314"/>
    <property type="project" value="RGD"/>
</dbReference>
<dbReference type="GO" id="GO:0042011">
    <property type="term" value="F:interleukin-16 binding"/>
    <property type="evidence" value="ECO:0000266"/>
    <property type="project" value="RGD"/>
</dbReference>
<dbReference type="GO" id="GO:0042012">
    <property type="term" value="F:interleukin-16 receptor activity"/>
    <property type="evidence" value="ECO:0000266"/>
    <property type="project" value="RGD"/>
</dbReference>
<dbReference type="GO" id="GO:0008289">
    <property type="term" value="F:lipid binding"/>
    <property type="evidence" value="ECO:0000266"/>
    <property type="project" value="RGD"/>
</dbReference>
<dbReference type="GO" id="GO:0042289">
    <property type="term" value="F:MHC class II protein binding"/>
    <property type="evidence" value="ECO:0000266"/>
    <property type="project" value="RGD"/>
</dbReference>
<dbReference type="GO" id="GO:0023026">
    <property type="term" value="F:MHC class II protein complex binding"/>
    <property type="evidence" value="ECO:0000250"/>
    <property type="project" value="UniProtKB"/>
</dbReference>
<dbReference type="GO" id="GO:0042803">
    <property type="term" value="F:protein homodimerization activity"/>
    <property type="evidence" value="ECO:0000266"/>
    <property type="project" value="RGD"/>
</dbReference>
<dbReference type="GO" id="GO:0019901">
    <property type="term" value="F:protein kinase binding"/>
    <property type="evidence" value="ECO:0000353"/>
    <property type="project" value="RGD"/>
</dbReference>
<dbReference type="GO" id="GO:1990782">
    <property type="term" value="F:protein tyrosine kinase binding"/>
    <property type="evidence" value="ECO:0000314"/>
    <property type="project" value="RGD"/>
</dbReference>
<dbReference type="GO" id="GO:0005102">
    <property type="term" value="F:signaling receptor binding"/>
    <property type="evidence" value="ECO:0000353"/>
    <property type="project" value="ARUK-UCL"/>
</dbReference>
<dbReference type="GO" id="GO:0008270">
    <property type="term" value="F:zinc ion binding"/>
    <property type="evidence" value="ECO:0000266"/>
    <property type="project" value="RGD"/>
</dbReference>
<dbReference type="GO" id="GO:0002250">
    <property type="term" value="P:adaptive immune response"/>
    <property type="evidence" value="ECO:0007669"/>
    <property type="project" value="UniProtKB-KW"/>
</dbReference>
<dbReference type="GO" id="GO:0019722">
    <property type="term" value="P:calcium-mediated signaling"/>
    <property type="evidence" value="ECO:0000266"/>
    <property type="project" value="RGD"/>
</dbReference>
<dbReference type="GO" id="GO:0007155">
    <property type="term" value="P:cell adhesion"/>
    <property type="evidence" value="ECO:0007669"/>
    <property type="project" value="InterPro"/>
</dbReference>
<dbReference type="GO" id="GO:0007166">
    <property type="term" value="P:cell surface receptor signaling pathway"/>
    <property type="evidence" value="ECO:0000266"/>
    <property type="project" value="RGD"/>
</dbReference>
<dbReference type="GO" id="GO:0097011">
    <property type="term" value="P:cellular response to granulocyte macrophage colony-stimulating factor stimulus"/>
    <property type="evidence" value="ECO:0000266"/>
    <property type="project" value="RGD"/>
</dbReference>
<dbReference type="GO" id="GO:1904637">
    <property type="term" value="P:cellular response to ionomycin"/>
    <property type="evidence" value="ECO:0000270"/>
    <property type="project" value="RGD"/>
</dbReference>
<dbReference type="GO" id="GO:0050829">
    <property type="term" value="P:defense response to Gram-negative bacterium"/>
    <property type="evidence" value="ECO:0000266"/>
    <property type="project" value="RGD"/>
</dbReference>
<dbReference type="GO" id="GO:0035397">
    <property type="term" value="P:helper T cell enhancement of adaptive immune response"/>
    <property type="evidence" value="ECO:0000266"/>
    <property type="project" value="RGD"/>
</dbReference>
<dbReference type="GO" id="GO:0035723">
    <property type="term" value="P:interleukin-15-mediated signaling pathway"/>
    <property type="evidence" value="ECO:0000266"/>
    <property type="project" value="RGD"/>
</dbReference>
<dbReference type="GO" id="GO:0030225">
    <property type="term" value="P:macrophage differentiation"/>
    <property type="evidence" value="ECO:0000266"/>
    <property type="project" value="RGD"/>
</dbReference>
<dbReference type="GO" id="GO:0032507">
    <property type="term" value="P:maintenance of protein location in cell"/>
    <property type="evidence" value="ECO:0000266"/>
    <property type="project" value="RGD"/>
</dbReference>
<dbReference type="GO" id="GO:0010524">
    <property type="term" value="P:positive regulation of calcium ion transport into cytosol"/>
    <property type="evidence" value="ECO:0000314"/>
    <property type="project" value="RGD"/>
</dbReference>
<dbReference type="GO" id="GO:0050850">
    <property type="term" value="P:positive regulation of calcium-mediated signaling"/>
    <property type="evidence" value="ECO:0000266"/>
    <property type="project" value="RGD"/>
</dbReference>
<dbReference type="GO" id="GO:0043123">
    <property type="term" value="P:positive regulation of canonical NF-kappaB signal transduction"/>
    <property type="evidence" value="ECO:0000266"/>
    <property type="project" value="RGD"/>
</dbReference>
<dbReference type="GO" id="GO:0045893">
    <property type="term" value="P:positive regulation of DNA-templated transcription"/>
    <property type="evidence" value="ECO:0000266"/>
    <property type="project" value="RGD"/>
</dbReference>
<dbReference type="GO" id="GO:0070374">
    <property type="term" value="P:positive regulation of ERK1 and ERK2 cascade"/>
    <property type="evidence" value="ECO:0000266"/>
    <property type="project" value="RGD"/>
</dbReference>
<dbReference type="GO" id="GO:0043410">
    <property type="term" value="P:positive regulation of MAPK cascade"/>
    <property type="evidence" value="ECO:0000266"/>
    <property type="project" value="RGD"/>
</dbReference>
<dbReference type="GO" id="GO:0045657">
    <property type="term" value="P:positive regulation of monocyte differentiation"/>
    <property type="evidence" value="ECO:0000266"/>
    <property type="project" value="RGD"/>
</dbReference>
<dbReference type="GO" id="GO:0050870">
    <property type="term" value="P:positive regulation of T cell activation"/>
    <property type="evidence" value="ECO:0000266"/>
    <property type="project" value="RGD"/>
</dbReference>
<dbReference type="GO" id="GO:0042102">
    <property type="term" value="P:positive regulation of T cell proliferation"/>
    <property type="evidence" value="ECO:0000315"/>
    <property type="project" value="RGD"/>
</dbReference>
<dbReference type="GO" id="GO:0046598">
    <property type="term" value="P:positive regulation of viral entry into host cell"/>
    <property type="evidence" value="ECO:0000266"/>
    <property type="project" value="RGD"/>
</dbReference>
<dbReference type="GO" id="GO:0051924">
    <property type="term" value="P:regulation of calcium ion transport"/>
    <property type="evidence" value="ECO:0000266"/>
    <property type="project" value="RGD"/>
</dbReference>
<dbReference type="GO" id="GO:0050863">
    <property type="term" value="P:regulation of T cell activation"/>
    <property type="evidence" value="ECO:0000266"/>
    <property type="project" value="RGD"/>
</dbReference>
<dbReference type="GO" id="GO:0032355">
    <property type="term" value="P:response to estradiol"/>
    <property type="evidence" value="ECO:0000270"/>
    <property type="project" value="RGD"/>
</dbReference>
<dbReference type="GO" id="GO:0045471">
    <property type="term" value="P:response to ethanol"/>
    <property type="evidence" value="ECO:0000270"/>
    <property type="project" value="RGD"/>
</dbReference>
<dbReference type="GO" id="GO:1904313">
    <property type="term" value="P:response to methamphetamine hydrochloride"/>
    <property type="evidence" value="ECO:0000270"/>
    <property type="project" value="RGD"/>
</dbReference>
<dbReference type="GO" id="GO:0033280">
    <property type="term" value="P:response to vitamin D"/>
    <property type="evidence" value="ECO:0000270"/>
    <property type="project" value="RGD"/>
</dbReference>
<dbReference type="GO" id="GO:0042110">
    <property type="term" value="P:T cell activation"/>
    <property type="evidence" value="ECO:0000266"/>
    <property type="project" value="RGD"/>
</dbReference>
<dbReference type="GO" id="GO:0030217">
    <property type="term" value="P:T cell differentiation"/>
    <property type="evidence" value="ECO:0000250"/>
    <property type="project" value="UniProtKB"/>
</dbReference>
<dbReference type="GO" id="GO:0045058">
    <property type="term" value="P:T cell selection"/>
    <property type="evidence" value="ECO:0000250"/>
    <property type="project" value="UniProtKB"/>
</dbReference>
<dbReference type="CDD" id="cd22570">
    <property type="entry name" value="CD4_CD"/>
    <property type="match status" value="1"/>
</dbReference>
<dbReference type="CDD" id="cd07690">
    <property type="entry name" value="IgV_1_CD4"/>
    <property type="match status" value="1"/>
</dbReference>
<dbReference type="FunFam" id="1.20.5.900:FF:000001">
    <property type="entry name" value="T-cell surface glycoprotein CD4"/>
    <property type="match status" value="1"/>
</dbReference>
<dbReference type="FunFam" id="2.60.40.10:FF:001105">
    <property type="entry name" value="T-cell surface glycoprotein CD4"/>
    <property type="match status" value="1"/>
</dbReference>
<dbReference type="FunFam" id="2.60.40.10:FF:001221">
    <property type="entry name" value="T-cell surface glycoprotein CD4"/>
    <property type="match status" value="1"/>
</dbReference>
<dbReference type="FunFam" id="2.60.40.10:FF:001253">
    <property type="entry name" value="T-cell surface glycoprotein CD4"/>
    <property type="match status" value="1"/>
</dbReference>
<dbReference type="FunFam" id="2.60.40.10:FF:002969">
    <property type="entry name" value="T-cell surface glycoprotein CD4"/>
    <property type="match status" value="1"/>
</dbReference>
<dbReference type="Gene3D" id="2.60.40.10">
    <property type="entry name" value="Immunoglobulins"/>
    <property type="match status" value="4"/>
</dbReference>
<dbReference type="Gene3D" id="1.20.5.900">
    <property type="entry name" value="transmembrane domain of human cd4"/>
    <property type="match status" value="1"/>
</dbReference>
<dbReference type="InterPro" id="IPR000973">
    <property type="entry name" value="CD4"/>
</dbReference>
<dbReference type="InterPro" id="IPR015274">
    <property type="entry name" value="CD4-extracel"/>
</dbReference>
<dbReference type="InterPro" id="IPR007110">
    <property type="entry name" value="Ig-like_dom"/>
</dbReference>
<dbReference type="InterPro" id="IPR036179">
    <property type="entry name" value="Ig-like_dom_sf"/>
</dbReference>
<dbReference type="InterPro" id="IPR013783">
    <property type="entry name" value="Ig-like_fold"/>
</dbReference>
<dbReference type="InterPro" id="IPR008424">
    <property type="entry name" value="Ig_C2-set"/>
</dbReference>
<dbReference type="InterPro" id="IPR003599">
    <property type="entry name" value="Ig_sub"/>
</dbReference>
<dbReference type="InterPro" id="IPR013106">
    <property type="entry name" value="Ig_V-set"/>
</dbReference>
<dbReference type="InterPro" id="IPR013151">
    <property type="entry name" value="Immunoglobulin_dom"/>
</dbReference>
<dbReference type="InterPro" id="IPR021963">
    <property type="entry name" value="Tcell_CD4_Cterm"/>
</dbReference>
<dbReference type="PANTHER" id="PTHR11422">
    <property type="entry name" value="T-CELL SURFACE GLYCOPROTEIN CD4"/>
    <property type="match status" value="1"/>
</dbReference>
<dbReference type="PANTHER" id="PTHR11422:SF0">
    <property type="entry name" value="T-CELL SURFACE GLYCOPROTEIN CD4"/>
    <property type="match status" value="1"/>
</dbReference>
<dbReference type="Pfam" id="PF05790">
    <property type="entry name" value="C2-set"/>
    <property type="match status" value="2"/>
</dbReference>
<dbReference type="Pfam" id="PF09191">
    <property type="entry name" value="CD4-extracel"/>
    <property type="match status" value="1"/>
</dbReference>
<dbReference type="Pfam" id="PF00047">
    <property type="entry name" value="ig"/>
    <property type="match status" value="1"/>
</dbReference>
<dbReference type="Pfam" id="PF12104">
    <property type="entry name" value="Tcell_CD4_C"/>
    <property type="match status" value="1"/>
</dbReference>
<dbReference type="PRINTS" id="PR00692">
    <property type="entry name" value="CD4TCANTIGEN"/>
</dbReference>
<dbReference type="SMART" id="SM00409">
    <property type="entry name" value="IG"/>
    <property type="match status" value="3"/>
</dbReference>
<dbReference type="SMART" id="SM00406">
    <property type="entry name" value="IGv"/>
    <property type="match status" value="1"/>
</dbReference>
<dbReference type="SUPFAM" id="SSF48726">
    <property type="entry name" value="Immunoglobulin"/>
    <property type="match status" value="3"/>
</dbReference>
<dbReference type="PROSITE" id="PS50835">
    <property type="entry name" value="IG_LIKE"/>
    <property type="match status" value="1"/>
</dbReference>